<feature type="chain" id="PRO_0000412241" description="(S)-beta-macrocarpene synthase">
    <location>
        <begin position="1"/>
        <end position="548"/>
    </location>
</feature>
<feature type="short sequence motif" description="DDXXD motif" evidence="1">
    <location>
        <begin position="302"/>
        <end position="306"/>
    </location>
</feature>
<feature type="binding site" evidence="2">
    <location>
        <position position="302"/>
    </location>
    <ligand>
        <name>Mg(2+)</name>
        <dbReference type="ChEBI" id="CHEBI:18420"/>
        <label>1</label>
    </ligand>
</feature>
<feature type="binding site" evidence="2">
    <location>
        <position position="302"/>
    </location>
    <ligand>
        <name>Mg(2+)</name>
        <dbReference type="ChEBI" id="CHEBI:18420"/>
        <label>2</label>
    </ligand>
</feature>
<feature type="binding site" evidence="1">
    <location>
        <position position="302"/>
    </location>
    <ligand>
        <name>substrate</name>
    </ligand>
</feature>
<feature type="binding site" evidence="2">
    <location>
        <position position="306"/>
    </location>
    <ligand>
        <name>Mg(2+)</name>
        <dbReference type="ChEBI" id="CHEBI:18420"/>
        <label>1</label>
    </ligand>
</feature>
<feature type="binding site" evidence="2">
    <location>
        <position position="306"/>
    </location>
    <ligand>
        <name>Mg(2+)</name>
        <dbReference type="ChEBI" id="CHEBI:18420"/>
        <label>2</label>
    </ligand>
</feature>
<feature type="binding site" evidence="1">
    <location>
        <position position="306"/>
    </location>
    <ligand>
        <name>substrate</name>
    </ligand>
</feature>
<feature type="binding site" evidence="1">
    <location>
        <position position="443"/>
    </location>
    <ligand>
        <name>substrate</name>
    </ligand>
</feature>
<feature type="binding site" evidence="2">
    <location>
        <position position="446"/>
    </location>
    <ligand>
        <name>Mg(2+)</name>
        <dbReference type="ChEBI" id="CHEBI:18420"/>
        <label>3</label>
    </ligand>
</feature>
<feature type="binding site" evidence="1">
    <location>
        <position position="446"/>
    </location>
    <ligand>
        <name>substrate</name>
    </ligand>
</feature>
<feature type="binding site" evidence="2">
    <location>
        <position position="450"/>
    </location>
    <ligand>
        <name>Mg(2+)</name>
        <dbReference type="ChEBI" id="CHEBI:18420"/>
        <label>3</label>
    </ligand>
</feature>
<feature type="binding site" evidence="2">
    <location>
        <position position="454"/>
    </location>
    <ligand>
        <name>Mg(2+)</name>
        <dbReference type="ChEBI" id="CHEBI:18420"/>
        <label>3</label>
    </ligand>
</feature>
<feature type="sequence conflict" description="In Ref. 1; AAT70085." evidence="10" ref="1">
    <original>T</original>
    <variation>A</variation>
    <location>
        <position position="198"/>
    </location>
</feature>
<proteinExistence type="evidence at protein level"/>
<organism>
    <name type="scientific">Zea mays</name>
    <name type="common">Maize</name>
    <dbReference type="NCBI Taxonomy" id="4577"/>
    <lineage>
        <taxon>Eukaryota</taxon>
        <taxon>Viridiplantae</taxon>
        <taxon>Streptophyta</taxon>
        <taxon>Embryophyta</taxon>
        <taxon>Tracheophyta</taxon>
        <taxon>Spermatophyta</taxon>
        <taxon>Magnoliopsida</taxon>
        <taxon>Liliopsida</taxon>
        <taxon>Poales</taxon>
        <taxon>Poaceae</taxon>
        <taxon>PACMAD clade</taxon>
        <taxon>Panicoideae</taxon>
        <taxon>Andropogonodae</taxon>
        <taxon>Andropogoneae</taxon>
        <taxon>Tripsacinae</taxon>
        <taxon>Zea</taxon>
    </lineage>
</organism>
<keyword id="KW-0963">Cytoplasm</keyword>
<keyword id="KW-0413">Isomerase</keyword>
<keyword id="KW-0456">Lyase</keyword>
<keyword id="KW-0460">Magnesium</keyword>
<keyword id="KW-0464">Manganese</keyword>
<keyword id="KW-0479">Metal-binding</keyword>
<keyword id="KW-0611">Plant defense</keyword>
<keyword id="KW-1185">Reference proteome</keyword>
<evidence type="ECO:0000250" key="1">
    <source>
        <dbReference type="UniProtKB" id="A0A1C9J6A7"/>
    </source>
</evidence>
<evidence type="ECO:0000250" key="2">
    <source>
        <dbReference type="UniProtKB" id="Q40577"/>
    </source>
</evidence>
<evidence type="ECO:0000250" key="3">
    <source>
        <dbReference type="UniProtKB" id="Q6JD73"/>
    </source>
</evidence>
<evidence type="ECO:0000250" key="4">
    <source>
        <dbReference type="UniProtKB" id="Q6Q3H2"/>
    </source>
</evidence>
<evidence type="ECO:0000269" key="5">
    <source>
    </source>
</evidence>
<evidence type="ECO:0000269" key="6">
    <source>
    </source>
</evidence>
<evidence type="ECO:0000269" key="7">
    <source>
    </source>
</evidence>
<evidence type="ECO:0000303" key="8">
    <source>
    </source>
</evidence>
<evidence type="ECO:0000303" key="9">
    <source>
    </source>
</evidence>
<evidence type="ECO:0000305" key="10"/>
<evidence type="ECO:0000305" key="11">
    <source>
    </source>
</evidence>
<evidence type="ECO:0000305" key="12">
    <source>
    </source>
</evidence>
<evidence type="ECO:0000312" key="13">
    <source>
        <dbReference type="EMBL" id="AQK40792.1"/>
    </source>
</evidence>
<name>TPS6_MAIZE</name>
<comment type="function">
    <text evidence="6">Involved in the biosynthesis of the bicyclic sesquiterpene (S)-beta-macrocarpene. Can use both geranyl diphosphate and farnesyl diphosphate as substrate, but not geranylgeranyl diphosphate. Produces mainly (S)-beta-macrocarpene, but also smaller amounts of beta-bisabolene and (E)-beta-farnesene when used with farnesyl diphosphate as substrate. In the presence of geranyl diphosphate, produces the acyclic monoterpenes beta-myrcene and linalool along with minor amounts of the cyclic compounds limonene, alpha-thujene, sabinene and alpha-terpinolene. May be involved in plant defense.</text>
</comment>
<comment type="catalytic activity">
    <reaction evidence="6">
        <text>(S)-beta-bisabolene = (S)-beta-macrocarpene</text>
        <dbReference type="Rhea" id="RHEA:28282"/>
        <dbReference type="ChEBI" id="CHEBI:49263"/>
        <dbReference type="ChEBI" id="CHEBI:61344"/>
        <dbReference type="EC" id="5.5.1.17"/>
    </reaction>
    <physiologicalReaction direction="left-to-right" evidence="6">
        <dbReference type="Rhea" id="RHEA:28283"/>
    </physiologicalReaction>
</comment>
<comment type="catalytic activity">
    <reaction evidence="6">
        <text>(2E,6E)-farnesyl diphosphate = (S)-beta-bisabolene + diphosphate</text>
        <dbReference type="Rhea" id="RHEA:28266"/>
        <dbReference type="ChEBI" id="CHEBI:33019"/>
        <dbReference type="ChEBI" id="CHEBI:49263"/>
        <dbReference type="ChEBI" id="CHEBI:175763"/>
        <dbReference type="EC" id="4.2.3.55"/>
    </reaction>
    <physiologicalReaction direction="left-to-right" evidence="6">
        <dbReference type="Rhea" id="RHEA:28267"/>
    </physiologicalReaction>
</comment>
<comment type="catalytic activity">
    <reaction evidence="6">
        <text>(2E)-geranyl diphosphate = (4S)-limonene + diphosphate</text>
        <dbReference type="Rhea" id="RHEA:12869"/>
        <dbReference type="ChEBI" id="CHEBI:15383"/>
        <dbReference type="ChEBI" id="CHEBI:33019"/>
        <dbReference type="ChEBI" id="CHEBI:58057"/>
        <dbReference type="EC" id="4.2.3.16"/>
    </reaction>
    <physiologicalReaction direction="left-to-right" evidence="6">
        <dbReference type="Rhea" id="RHEA:12870"/>
    </physiologicalReaction>
</comment>
<comment type="catalytic activity">
    <reaction evidence="6">
        <text>(2E)-geranyl diphosphate = beta-myrcene + diphosphate</text>
        <dbReference type="Rhea" id="RHEA:16965"/>
        <dbReference type="ChEBI" id="CHEBI:17221"/>
        <dbReference type="ChEBI" id="CHEBI:33019"/>
        <dbReference type="ChEBI" id="CHEBI:58057"/>
        <dbReference type="EC" id="4.2.3.15"/>
    </reaction>
    <physiologicalReaction direction="left-to-right" evidence="6">
        <dbReference type="Rhea" id="RHEA:16966"/>
    </physiologicalReaction>
</comment>
<comment type="catalytic activity">
    <reaction evidence="6">
        <text>(2E)-geranyl diphosphate = terpinolene + diphosphate</text>
        <dbReference type="Rhea" id="RHEA:25500"/>
        <dbReference type="ChEBI" id="CHEBI:9457"/>
        <dbReference type="ChEBI" id="CHEBI:33019"/>
        <dbReference type="ChEBI" id="CHEBI:58057"/>
        <dbReference type="EC" id="4.2.3.113"/>
    </reaction>
    <physiologicalReaction direction="left-to-right" evidence="6">
        <dbReference type="Rhea" id="RHEA:25501"/>
    </physiologicalReaction>
</comment>
<comment type="catalytic activity">
    <reaction evidence="6">
        <text>(2E)-geranyl diphosphate + H2O = (S)-linalool + diphosphate</text>
        <dbReference type="Rhea" id="RHEA:24116"/>
        <dbReference type="ChEBI" id="CHEBI:98"/>
        <dbReference type="ChEBI" id="CHEBI:15377"/>
        <dbReference type="ChEBI" id="CHEBI:33019"/>
        <dbReference type="ChEBI" id="CHEBI:58057"/>
        <dbReference type="EC" id="4.2.3.25"/>
    </reaction>
    <physiologicalReaction direction="left-to-right" evidence="6">
        <dbReference type="Rhea" id="RHEA:24117"/>
    </physiologicalReaction>
</comment>
<comment type="cofactor">
    <cofactor evidence="11">
        <name>Mg(2+)</name>
        <dbReference type="ChEBI" id="CHEBI:18420"/>
    </cofactor>
    <cofactor evidence="11">
        <name>Mn(2+)</name>
        <dbReference type="ChEBI" id="CHEBI:29035"/>
    </cofactor>
    <text evidence="11">Binds 3 Mg(2+) or Mn(2+) ions per subunit.</text>
</comment>
<comment type="biophysicochemical properties">
    <kinetics>
        <KM evidence="6">2.1 uM for farnesyl diphosphate</KM>
        <KM evidence="6">1.1 uM for geranyl diphosphate</KM>
        <KM evidence="6">130.7 uM for magnesium (in the presence of 10 uM farnesyl diphosphate)</KM>
        <KM evidence="6">23.4 uM for manganese (in the presence of 10 uM farnesyl diphosphate)</KM>
    </kinetics>
    <phDependence>
        <text evidence="6">Optimum pH is 7.0. Higher pH values favor the formation of (S)-beta-bisabolene.</text>
    </phDependence>
</comment>
<comment type="pathway">
    <text evidence="12">Secondary metabolite biosynthesis; terpenoid biosynthesis.</text>
</comment>
<comment type="subunit">
    <text evidence="3">Monomer.</text>
</comment>
<comment type="subcellular location">
    <subcellularLocation>
        <location evidence="4">Cytoplasm</location>
    </subcellularLocation>
</comment>
<comment type="tissue specificity">
    <text evidence="6">Expressed in roots. Not detected in leaves, unless damaged by herbivory or infected by fungi.</text>
</comment>
<comment type="induction">
    <text evidence="5 6 7">Up-regulated by herbivory and fungi (e.g. Fusarium spp., C.heterostrophus, F.verticillioides, R.microsporus and A.parasiticus).</text>
</comment>
<comment type="domain">
    <text evidence="1">The Asp-Asp-Xaa-Xaa-Asp/Glu (DDXXD/E) motif is important for the catalytic activity, presumably through binding to Mg(2+).</text>
</comment>
<comment type="miscellaneous">
    <text>In the presence of magnesium, the product spectrum is shifted toward an increased production of (S)-beta-bisabolene and a decreased production of (S)-beta-macrocarpene.</text>
</comment>
<comment type="similarity">
    <text evidence="10">Belongs to the terpene synthase family.</text>
</comment>
<protein>
    <recommendedName>
        <fullName evidence="9">(S)-beta-macrocarpene synthase</fullName>
        <ecNumber evidence="6">5.5.1.17</ecNumber>
    </recommendedName>
    <alternativeName>
        <fullName evidence="9">Alpha-terpinolene synthase</fullName>
        <ecNumber evidence="6">4.2.3.113</ecNumber>
    </alternativeName>
    <alternativeName>
        <fullName evidence="9">Beta-bisabolene synthase</fullName>
        <ecNumber evidence="6">4.2.3.55</ecNumber>
    </alternativeName>
    <alternativeName>
        <fullName evidence="9">Beta-myrcene synthase</fullName>
        <ecNumber evidence="6">4.2.3.15</ecNumber>
    </alternativeName>
    <alternativeName>
        <fullName evidence="9">Limonene synthase</fullName>
        <ecNumber evidence="6">4.2.3.16</ecNumber>
    </alternativeName>
    <alternativeName>
        <fullName evidence="9">Linalool synthase</fullName>
        <ecNumber evidence="6">4.2.3.25</ecNumber>
    </alternativeName>
    <alternativeName>
        <fullName evidence="9">Terpene synthase 6</fullName>
    </alternativeName>
</protein>
<accession>Q5GJ60</accession>
<accession>A0A1Q0XLD3</accession>
<accession>Q4L0R7</accession>
<sequence>MAAPTLTADGPRLGQQEMKKMSPSFHPTLWGDFFLSYEAPTEAQEAQMREKAAVLKEEVRNMIKGSHDVPEIVDLIITLQRLNLDYHYEDEINEKLTVVYKSNYDGGNLDLVSRRFYLLRKCGYDVSSDVFLKFKDQLGNFVEADTRSLLSLYNAAFLRIHGETVLDEAISFTMRVLQDRLEHLESPLAEEVSSALDTPLFRRVGTLEMKDYIPIYEKDAKQNKSILEFAKLNFNLLQLRYSSELKECTTWWKELRVESNLSFVRDRIVEVYFWMSGGCYDPQYSHSRIILTKIVAFITILDDTLDSHATSCESMQLAEAIERWDESAVSLLPEYMKDFYMYLLKTFSSFENELGPDKSYRVFYLKEAVKELVREYTKEIKWRDEDYVPKTLKEHLKVSLISIGGTLVLCSAFVGMGDVVTKKIMKWVMSDAELVKSFGIFVRLSNDIVSTKREQREKHCVSTVQCYMKQHEITMDEACEQIKELTEDSWKFMIEQGLALKEYPIIVPRTVLEFARTVDYMYKEADKYTVSHTIKDMLTSLYVKPVLM</sequence>
<dbReference type="EC" id="5.5.1.17" evidence="6"/>
<dbReference type="EC" id="4.2.3.113" evidence="6"/>
<dbReference type="EC" id="4.2.3.55" evidence="6"/>
<dbReference type="EC" id="4.2.3.15" evidence="6"/>
<dbReference type="EC" id="4.2.3.16" evidence="6"/>
<dbReference type="EC" id="4.2.3.25" evidence="6"/>
<dbReference type="EMBL" id="AY647253">
    <property type="protein sequence ID" value="AAT70085.1"/>
    <property type="molecule type" value="mRNA"/>
</dbReference>
<dbReference type="EMBL" id="AY518315">
    <property type="protein sequence ID" value="AAS88576.1"/>
    <property type="molecule type" value="mRNA"/>
</dbReference>
<dbReference type="EMBL" id="CM000786">
    <property type="protein sequence ID" value="AQK40792.1"/>
    <property type="molecule type" value="Genomic_DNA"/>
</dbReference>
<dbReference type="EMBL" id="CM000786">
    <property type="protein sequence ID" value="AQK40795.1"/>
    <property type="molecule type" value="Genomic_DNA"/>
</dbReference>
<dbReference type="RefSeq" id="NP_001105674.1">
    <property type="nucleotide sequence ID" value="NM_001112204.1"/>
</dbReference>
<dbReference type="SMR" id="Q5GJ60"/>
<dbReference type="STRING" id="4577.Q5GJ60"/>
<dbReference type="GeneID" id="542688"/>
<dbReference type="KEGG" id="zma:542688"/>
<dbReference type="MaizeGDB" id="1219887"/>
<dbReference type="HOGENOM" id="CLU_003125_7_2_1"/>
<dbReference type="InParanoid" id="Q5GJ60"/>
<dbReference type="OMA" id="HIHFCED"/>
<dbReference type="OrthoDB" id="1877784at2759"/>
<dbReference type="BioCyc" id="MetaCyc:MONOMER-15969"/>
<dbReference type="BRENDA" id="4.2.3.55">
    <property type="organism ID" value="6752"/>
</dbReference>
<dbReference type="BRENDA" id="5.5.1.17">
    <property type="organism ID" value="6752"/>
</dbReference>
<dbReference type="UniPathway" id="UPA00213"/>
<dbReference type="Proteomes" id="UP000007305">
    <property type="component" value="Unplaced"/>
</dbReference>
<dbReference type="ExpressionAtlas" id="Q5GJ60">
    <property type="expression patterns" value="baseline and differential"/>
</dbReference>
<dbReference type="GO" id="GO:0005737">
    <property type="term" value="C:cytoplasm"/>
    <property type="evidence" value="ECO:0007669"/>
    <property type="project" value="UniProtKB-SubCell"/>
</dbReference>
<dbReference type="GO" id="GO:0050552">
    <property type="term" value="F:(4S)-limonene synthase activity"/>
    <property type="evidence" value="ECO:0007669"/>
    <property type="project" value="UniProtKB-EC"/>
</dbReference>
<dbReference type="GO" id="GO:0016853">
    <property type="term" value="F:isomerase activity"/>
    <property type="evidence" value="ECO:0007669"/>
    <property type="project" value="UniProtKB-KW"/>
</dbReference>
<dbReference type="GO" id="GO:0000287">
    <property type="term" value="F:magnesium ion binding"/>
    <property type="evidence" value="ECO:0007669"/>
    <property type="project" value="InterPro"/>
</dbReference>
<dbReference type="GO" id="GO:0050551">
    <property type="term" value="F:myrcene synthase activity"/>
    <property type="evidence" value="ECO:0007669"/>
    <property type="project" value="UniProtKB-EC"/>
</dbReference>
<dbReference type="GO" id="GO:0034007">
    <property type="term" value="F:S-linalool synthase activity"/>
    <property type="evidence" value="ECO:0007669"/>
    <property type="project" value="UniProtKB-EC"/>
</dbReference>
<dbReference type="GO" id="GO:0010333">
    <property type="term" value="F:terpene synthase activity"/>
    <property type="evidence" value="ECO:0000314"/>
    <property type="project" value="UniProtKB"/>
</dbReference>
<dbReference type="GO" id="GO:0050832">
    <property type="term" value="P:defense response to fungus"/>
    <property type="evidence" value="ECO:0000270"/>
    <property type="project" value="UniProtKB"/>
</dbReference>
<dbReference type="GO" id="GO:0016102">
    <property type="term" value="P:diterpenoid biosynthetic process"/>
    <property type="evidence" value="ECO:0007669"/>
    <property type="project" value="InterPro"/>
</dbReference>
<dbReference type="GO" id="GO:0016114">
    <property type="term" value="P:terpenoid biosynthetic process"/>
    <property type="evidence" value="ECO:0000314"/>
    <property type="project" value="UniProtKB"/>
</dbReference>
<dbReference type="CDD" id="cd00684">
    <property type="entry name" value="Terpene_cyclase_plant_C1"/>
    <property type="match status" value="1"/>
</dbReference>
<dbReference type="FunFam" id="1.10.600.10:FF:000007">
    <property type="entry name" value="Isoprene synthase, chloroplastic"/>
    <property type="match status" value="1"/>
</dbReference>
<dbReference type="Gene3D" id="1.10.600.10">
    <property type="entry name" value="Farnesyl Diphosphate Synthase"/>
    <property type="match status" value="1"/>
</dbReference>
<dbReference type="Gene3D" id="1.50.10.130">
    <property type="entry name" value="Terpene synthase, N-terminal domain"/>
    <property type="match status" value="1"/>
</dbReference>
<dbReference type="InterPro" id="IPR008949">
    <property type="entry name" value="Isoprenoid_synthase_dom_sf"/>
</dbReference>
<dbReference type="InterPro" id="IPR034741">
    <property type="entry name" value="Terpene_cyclase-like_1_C"/>
</dbReference>
<dbReference type="InterPro" id="IPR044814">
    <property type="entry name" value="Terpene_cyclase_plant_C1"/>
</dbReference>
<dbReference type="InterPro" id="IPR001906">
    <property type="entry name" value="Terpene_synth_N"/>
</dbReference>
<dbReference type="InterPro" id="IPR036965">
    <property type="entry name" value="Terpene_synth_N_sf"/>
</dbReference>
<dbReference type="InterPro" id="IPR050148">
    <property type="entry name" value="Terpene_synthase-like"/>
</dbReference>
<dbReference type="InterPro" id="IPR005630">
    <property type="entry name" value="Terpene_synthase_metal-bd"/>
</dbReference>
<dbReference type="InterPro" id="IPR008930">
    <property type="entry name" value="Terpenoid_cyclase/PrenylTrfase"/>
</dbReference>
<dbReference type="PANTHER" id="PTHR31225:SF93">
    <property type="entry name" value="ALPHA-HUMULENE_(-)-(E)-BETA-CARYOPHYLLENE SYNTHASE"/>
    <property type="match status" value="1"/>
</dbReference>
<dbReference type="PANTHER" id="PTHR31225">
    <property type="entry name" value="OS04G0344100 PROTEIN-RELATED"/>
    <property type="match status" value="1"/>
</dbReference>
<dbReference type="Pfam" id="PF01397">
    <property type="entry name" value="Terpene_synth"/>
    <property type="match status" value="1"/>
</dbReference>
<dbReference type="Pfam" id="PF03936">
    <property type="entry name" value="Terpene_synth_C"/>
    <property type="match status" value="1"/>
</dbReference>
<dbReference type="SFLD" id="SFLDS00005">
    <property type="entry name" value="Isoprenoid_Synthase_Type_I"/>
    <property type="match status" value="1"/>
</dbReference>
<dbReference type="SFLD" id="SFLDG01019">
    <property type="entry name" value="Terpene_Cyclase_Like_1_C_Termi"/>
    <property type="match status" value="1"/>
</dbReference>
<dbReference type="SUPFAM" id="SSF48239">
    <property type="entry name" value="Terpenoid cyclases/Protein prenyltransferases"/>
    <property type="match status" value="1"/>
</dbReference>
<dbReference type="SUPFAM" id="SSF48576">
    <property type="entry name" value="Terpenoid synthases"/>
    <property type="match status" value="1"/>
</dbReference>
<reference key="1">
    <citation type="journal article" date="2005" name="Plant Physiol.">
        <title>Dissecting defense-related and developmental transcriptional responses of maize during Ustilago maydis infection and subsequent tumor formation.</title>
        <authorList>
            <person name="Basse C.W."/>
        </authorList>
    </citation>
    <scope>NUCLEOTIDE SEQUENCE [MRNA]</scope>
    <scope>INDUCTION BY FUNGI</scope>
    <source>
        <strain>cv. Golden Bantam early</strain>
    </source>
</reference>
<reference key="2">
    <citation type="journal article" date="2008" name="J. Biol. Chem.">
        <title>Protonation of a neutral (S)-beta-bisabolene intermediate is involved in (S)-beta-macrocarpene formation by the maize sesquiterpene synthases TPS6 and TPS11.</title>
        <authorList>
            <person name="Koellner T.G."/>
            <person name="Schnee C."/>
            <person name="Li S."/>
            <person name="Svatos A."/>
            <person name="Schneider B."/>
            <person name="Gershenzon J."/>
            <person name="Degenhardt J."/>
        </authorList>
    </citation>
    <scope>NUCLEOTIDE SEQUENCE [MRNA]</scope>
    <scope>FUNCTION</scope>
    <scope>CATALYTIC ACTIVITY</scope>
    <scope>COFACTOR</scope>
    <scope>BIOPHYSICOCHEMICAL PROPERTIES</scope>
    <scope>INDUCTION BY HERBIVORY</scope>
    <scope>TISSUE SPECIFICITY</scope>
    <source>
        <strain>cv. B73</strain>
    </source>
</reference>
<reference key="3">
    <citation type="journal article" date="2009" name="Science">
        <title>The B73 maize genome: complexity, diversity, and dynamics.</title>
        <authorList>
            <person name="Schnable P.S."/>
            <person name="Ware D."/>
            <person name="Fulton R.S."/>
            <person name="Stein J.C."/>
            <person name="Wei F."/>
            <person name="Pasternak S."/>
            <person name="Liang C."/>
            <person name="Zhang J."/>
            <person name="Fulton L."/>
            <person name="Graves T.A."/>
            <person name="Minx P."/>
            <person name="Reily A.D."/>
            <person name="Courtney L."/>
            <person name="Kruchowski S.S."/>
            <person name="Tomlinson C."/>
            <person name="Strong C."/>
            <person name="Delehaunty K."/>
            <person name="Fronick C."/>
            <person name="Courtney B."/>
            <person name="Rock S.M."/>
            <person name="Belter E."/>
            <person name="Du F."/>
            <person name="Kim K."/>
            <person name="Abbott R.M."/>
            <person name="Cotton M."/>
            <person name="Levy A."/>
            <person name="Marchetto P."/>
            <person name="Ochoa K."/>
            <person name="Jackson S.M."/>
            <person name="Gillam B."/>
            <person name="Chen W."/>
            <person name="Yan L."/>
            <person name="Higginbotham J."/>
            <person name="Cardenas M."/>
            <person name="Waligorski J."/>
            <person name="Applebaum E."/>
            <person name="Phelps L."/>
            <person name="Falcone J."/>
            <person name="Kanchi K."/>
            <person name="Thane T."/>
            <person name="Scimone A."/>
            <person name="Thane N."/>
            <person name="Henke J."/>
            <person name="Wang T."/>
            <person name="Ruppert J."/>
            <person name="Shah N."/>
            <person name="Rotter K."/>
            <person name="Hodges J."/>
            <person name="Ingenthron E."/>
            <person name="Cordes M."/>
            <person name="Kohlberg S."/>
            <person name="Sgro J."/>
            <person name="Delgado B."/>
            <person name="Mead K."/>
            <person name="Chinwalla A."/>
            <person name="Leonard S."/>
            <person name="Crouse K."/>
            <person name="Collura K."/>
            <person name="Kudrna D."/>
            <person name="Currie J."/>
            <person name="He R."/>
            <person name="Angelova A."/>
            <person name="Rajasekar S."/>
            <person name="Mueller T."/>
            <person name="Lomeli R."/>
            <person name="Scara G."/>
            <person name="Ko A."/>
            <person name="Delaney K."/>
            <person name="Wissotski M."/>
            <person name="Lopez G."/>
            <person name="Campos D."/>
            <person name="Braidotti M."/>
            <person name="Ashley E."/>
            <person name="Golser W."/>
            <person name="Kim H."/>
            <person name="Lee S."/>
            <person name="Lin J."/>
            <person name="Dujmic Z."/>
            <person name="Kim W."/>
            <person name="Talag J."/>
            <person name="Zuccolo A."/>
            <person name="Fan C."/>
            <person name="Sebastian A."/>
            <person name="Kramer M."/>
            <person name="Spiegel L."/>
            <person name="Nascimento L."/>
            <person name="Zutavern T."/>
            <person name="Miller B."/>
            <person name="Ambroise C."/>
            <person name="Muller S."/>
            <person name="Spooner W."/>
            <person name="Narechania A."/>
            <person name="Ren L."/>
            <person name="Wei S."/>
            <person name="Kumari S."/>
            <person name="Faga B."/>
            <person name="Levy M.J."/>
            <person name="McMahan L."/>
            <person name="Van Buren P."/>
            <person name="Vaughn M.W."/>
            <person name="Ying K."/>
            <person name="Yeh C.-T."/>
            <person name="Emrich S.J."/>
            <person name="Jia Y."/>
            <person name="Kalyanaraman A."/>
            <person name="Hsia A.-P."/>
            <person name="Barbazuk W.B."/>
            <person name="Baucom R.S."/>
            <person name="Brutnell T.P."/>
            <person name="Carpita N.C."/>
            <person name="Chaparro C."/>
            <person name="Chia J.-M."/>
            <person name="Deragon J.-M."/>
            <person name="Estill J.C."/>
            <person name="Fu Y."/>
            <person name="Jeddeloh J.A."/>
            <person name="Han Y."/>
            <person name="Lee H."/>
            <person name="Li P."/>
            <person name="Lisch D.R."/>
            <person name="Liu S."/>
            <person name="Liu Z."/>
            <person name="Nagel D.H."/>
            <person name="McCann M.C."/>
            <person name="SanMiguel P."/>
            <person name="Myers A.M."/>
            <person name="Nettleton D."/>
            <person name="Nguyen J."/>
            <person name="Penning B.W."/>
            <person name="Ponnala L."/>
            <person name="Schneider K.L."/>
            <person name="Schwartz D.C."/>
            <person name="Sharma A."/>
            <person name="Soderlund C."/>
            <person name="Springer N.M."/>
            <person name="Sun Q."/>
            <person name="Wang H."/>
            <person name="Waterman M."/>
            <person name="Westerman R."/>
            <person name="Wolfgruber T.K."/>
            <person name="Yang L."/>
            <person name="Yu Y."/>
            <person name="Zhang L."/>
            <person name="Zhou S."/>
            <person name="Zhu Q."/>
            <person name="Bennetzen J.L."/>
            <person name="Dawe R.K."/>
            <person name="Jiang J."/>
            <person name="Jiang N."/>
            <person name="Presting G.G."/>
            <person name="Wessler S.R."/>
            <person name="Aluru S."/>
            <person name="Martienssen R.A."/>
            <person name="Clifton S.W."/>
            <person name="McCombie W.R."/>
            <person name="Wing R.A."/>
            <person name="Wilson R.K."/>
        </authorList>
    </citation>
    <scope>NUCLEOTIDE SEQUENCE [LARGE SCALE GENOMIC DNA]</scope>
    <source>
        <strain>cv. B73</strain>
        <tissue>Seedling</tissue>
    </source>
</reference>
<reference key="4">
    <citation type="journal article" date="2017" name="Plant Physiol.">
        <title>Selinene volatiles are essential precursors for maize defense promoting fungal pathogen resistance.</title>
        <authorList>
            <person name="Ding Y."/>
            <person name="Huffaker A."/>
            <person name="Koellner T.G."/>
            <person name="Weckwerth P."/>
            <person name="Robert C.A.M."/>
            <person name="Spencer J.L."/>
            <person name="Lipka A.E."/>
            <person name="Schmelz E.A."/>
        </authorList>
    </citation>
    <scope>INDUCTION BY FUNGUS</scope>
</reference>
<reference key="5">
    <citation type="journal article" date="2019" name="Planta">
        <title>Biosynthesis and function of terpenoid defense compounds in maize (Zea mays).</title>
        <authorList>
            <person name="Block A.K."/>
            <person name="Vaughan M.M."/>
            <person name="Schmelz E.A."/>
            <person name="Christensen S.A."/>
        </authorList>
    </citation>
    <scope>REVIEW</scope>
</reference>
<gene>
    <name evidence="9" type="primary">TPS6</name>
    <name evidence="8" type="synonym">UMI2</name>
    <name evidence="13" type="ORF">ZEAMMB73_Zm00001d024207</name>
</gene>